<dbReference type="EMBL" id="Z28243">
    <property type="protein sequence ID" value="CAA82090.1"/>
    <property type="molecule type" value="Genomic_DNA"/>
</dbReference>
<dbReference type="EMBL" id="BK006944">
    <property type="protein sequence ID" value="DAA09173.1"/>
    <property type="molecule type" value="Genomic_DNA"/>
</dbReference>
<dbReference type="PIR" id="S38087">
    <property type="entry name" value="S38087"/>
</dbReference>
<dbReference type="RefSeq" id="NP_012943.1">
    <property type="nucleotide sequence ID" value="NM_001179808.1"/>
</dbReference>
<dbReference type="PDB" id="1PYO">
    <property type="method" value="X-ray"/>
    <property type="resolution" value="1.65 A"/>
    <property type="chains" value="E/F=54-57"/>
</dbReference>
<dbReference type="PDB" id="3EDR">
    <property type="method" value="X-ray"/>
    <property type="resolution" value="2.45 A"/>
    <property type="chains" value="E/F=54-57"/>
</dbReference>
<dbReference type="PDBsum" id="1PYO"/>
<dbReference type="PDBsum" id="3EDR"/>
<dbReference type="SMR" id="P36114"/>
<dbReference type="BioGRID" id="34150">
    <property type="interactions" value="156"/>
</dbReference>
<dbReference type="DIP" id="DIP-6636N"/>
<dbReference type="FunCoup" id="P36114">
    <property type="interactions" value="153"/>
</dbReference>
<dbReference type="IntAct" id="P36114">
    <property type="interactions" value="14"/>
</dbReference>
<dbReference type="iPTMnet" id="P36114"/>
<dbReference type="PaxDb" id="4932-YKR018C"/>
<dbReference type="PeptideAtlas" id="P36114"/>
<dbReference type="EnsemblFungi" id="YKR018C_mRNA">
    <property type="protein sequence ID" value="YKR018C"/>
    <property type="gene ID" value="YKR018C"/>
</dbReference>
<dbReference type="GeneID" id="853888"/>
<dbReference type="KEGG" id="sce:YKR018C"/>
<dbReference type="AGR" id="SGD:S000001726"/>
<dbReference type="SGD" id="S000001726">
    <property type="gene designation" value="YKR018C"/>
</dbReference>
<dbReference type="VEuPathDB" id="FungiDB:YKR018C"/>
<dbReference type="eggNOG" id="KOG3783">
    <property type="taxonomic scope" value="Eukaryota"/>
</dbReference>
<dbReference type="GeneTree" id="ENSGT00940000176789"/>
<dbReference type="HOGENOM" id="CLU_014926_0_0_1"/>
<dbReference type="InParanoid" id="P36114"/>
<dbReference type="OMA" id="WNGYNRM"/>
<dbReference type="OrthoDB" id="2154985at2759"/>
<dbReference type="BioCyc" id="YEAST:G3O-31994-MONOMER"/>
<dbReference type="BioGRID-ORCS" id="853888">
    <property type="hits" value="0 hits in 10 CRISPR screens"/>
</dbReference>
<dbReference type="EvolutionaryTrace" id="P36114"/>
<dbReference type="PRO" id="PR:P36114"/>
<dbReference type="Proteomes" id="UP000002311">
    <property type="component" value="Chromosome XI"/>
</dbReference>
<dbReference type="RNAct" id="P36114">
    <property type="molecule type" value="protein"/>
</dbReference>
<dbReference type="GO" id="GO:0005737">
    <property type="term" value="C:cytoplasm"/>
    <property type="evidence" value="ECO:0007005"/>
    <property type="project" value="SGD"/>
</dbReference>
<dbReference type="GO" id="GO:0005634">
    <property type="term" value="C:nucleus"/>
    <property type="evidence" value="ECO:0007005"/>
    <property type="project" value="SGD"/>
</dbReference>
<dbReference type="InterPro" id="IPR019412">
    <property type="entry name" value="Iml2/TPR_39"/>
</dbReference>
<dbReference type="InterPro" id="IPR011990">
    <property type="entry name" value="TPR-like_helical_dom_sf"/>
</dbReference>
<dbReference type="PANTHER" id="PTHR31859">
    <property type="entry name" value="TETRATRICOPEPTIDE REPEAT PROTEIN 39 FAMILY MEMBER"/>
    <property type="match status" value="1"/>
</dbReference>
<dbReference type="PANTHER" id="PTHR31859:SF1">
    <property type="entry name" value="TETRATRICOPEPTIDE REPEAT PROTEIN 39C"/>
    <property type="match status" value="1"/>
</dbReference>
<dbReference type="Pfam" id="PF10300">
    <property type="entry name" value="Iml2-TPR_39"/>
    <property type="match status" value="1"/>
</dbReference>
<dbReference type="SUPFAM" id="SSF48452">
    <property type="entry name" value="TPR-like"/>
    <property type="match status" value="1"/>
</dbReference>
<proteinExistence type="evidence at protein level"/>
<feature type="chain" id="PRO_0000203198" description="IML2-like protein YKR018C">
    <location>
        <begin position="1"/>
        <end position="725"/>
    </location>
</feature>
<feature type="modified residue" description="Phosphothreonine" evidence="5">
    <location>
        <position position="196"/>
    </location>
</feature>
<feature type="modified residue" description="Phosphoserine" evidence="5">
    <location>
        <position position="246"/>
    </location>
</feature>
<feature type="modified residue" description="Phosphoserine" evidence="6">
    <location>
        <position position="377"/>
    </location>
</feature>
<feature type="modified residue" description="Phosphoserine" evidence="4 5 6">
    <location>
        <position position="380"/>
    </location>
</feature>
<reference key="1">
    <citation type="journal article" date="1994" name="Nature">
        <title>Complete DNA sequence of yeast chromosome XI.</title>
        <authorList>
            <person name="Dujon B."/>
            <person name="Alexandraki D."/>
            <person name="Andre B."/>
            <person name="Ansorge W."/>
            <person name="Baladron V."/>
            <person name="Ballesta J.P.G."/>
            <person name="Banrevi A."/>
            <person name="Bolle P.-A."/>
            <person name="Bolotin-Fukuhara M."/>
            <person name="Bossier P."/>
            <person name="Bou G."/>
            <person name="Boyer J."/>
            <person name="Buitrago M.J."/>
            <person name="Cheret G."/>
            <person name="Colleaux L."/>
            <person name="Daignan-Fornier B."/>
            <person name="del Rey F."/>
            <person name="Dion C."/>
            <person name="Domdey H."/>
            <person name="Duesterhoeft A."/>
            <person name="Duesterhus S."/>
            <person name="Entian K.-D."/>
            <person name="Erfle H."/>
            <person name="Esteban P.F."/>
            <person name="Feldmann H."/>
            <person name="Fernandes L."/>
            <person name="Fobo G.M."/>
            <person name="Fritz C."/>
            <person name="Fukuhara H."/>
            <person name="Gabel C."/>
            <person name="Gaillon L."/>
            <person name="Garcia-Cantalejo J.M."/>
            <person name="Garcia-Ramirez J.J."/>
            <person name="Gent M.E."/>
            <person name="Ghazvini M."/>
            <person name="Goffeau A."/>
            <person name="Gonzalez A."/>
            <person name="Grothues D."/>
            <person name="Guerreiro P."/>
            <person name="Hegemann J.H."/>
            <person name="Hewitt N."/>
            <person name="Hilger F."/>
            <person name="Hollenberg C.P."/>
            <person name="Horaitis O."/>
            <person name="Indge K.J."/>
            <person name="Jacquier A."/>
            <person name="James C.M."/>
            <person name="Jauniaux J.-C."/>
            <person name="Jimenez A."/>
            <person name="Keuchel H."/>
            <person name="Kirchrath L."/>
            <person name="Kleine K."/>
            <person name="Koetter P."/>
            <person name="Legrain P."/>
            <person name="Liebl S."/>
            <person name="Louis E.J."/>
            <person name="Maia e Silva A."/>
            <person name="Marck C."/>
            <person name="Monnier A.-L."/>
            <person name="Moestl D."/>
            <person name="Mueller S."/>
            <person name="Obermaier B."/>
            <person name="Oliver S.G."/>
            <person name="Pallier C."/>
            <person name="Pascolo S."/>
            <person name="Pfeiffer F."/>
            <person name="Philippsen P."/>
            <person name="Planta R.J."/>
            <person name="Pohl F.M."/>
            <person name="Pohl T.M."/>
            <person name="Poehlmann R."/>
            <person name="Portetelle D."/>
            <person name="Purnelle B."/>
            <person name="Puzos V."/>
            <person name="Ramezani Rad M."/>
            <person name="Rasmussen S.W."/>
            <person name="Remacha M.A."/>
            <person name="Revuelta J.L."/>
            <person name="Richard G.-F."/>
            <person name="Rieger M."/>
            <person name="Rodrigues-Pousada C."/>
            <person name="Rose M."/>
            <person name="Rupp T."/>
            <person name="Santos M.A."/>
            <person name="Schwager C."/>
            <person name="Sensen C."/>
            <person name="Skala J."/>
            <person name="Soares H."/>
            <person name="Sor F."/>
            <person name="Stegemann J."/>
            <person name="Tettelin H."/>
            <person name="Thierry A."/>
            <person name="Tzermia M."/>
            <person name="Urrestarazu L.A."/>
            <person name="van Dyck L."/>
            <person name="van Vliet-Reedijk J.C."/>
            <person name="Valens M."/>
            <person name="Vandenbol M."/>
            <person name="Vilela C."/>
            <person name="Vissers S."/>
            <person name="von Wettstein D."/>
            <person name="Voss H."/>
            <person name="Wiemann S."/>
            <person name="Xu G."/>
            <person name="Zimmermann J."/>
            <person name="Haasemann M."/>
            <person name="Becker I."/>
            <person name="Mewes H.-W."/>
        </authorList>
    </citation>
    <scope>NUCLEOTIDE SEQUENCE [LARGE SCALE GENOMIC DNA]</scope>
    <source>
        <strain>ATCC 204508 / S288c</strain>
    </source>
</reference>
<reference key="2">
    <citation type="journal article" date="2014" name="G3 (Bethesda)">
        <title>The reference genome sequence of Saccharomyces cerevisiae: Then and now.</title>
        <authorList>
            <person name="Engel S.R."/>
            <person name="Dietrich F.S."/>
            <person name="Fisk D.G."/>
            <person name="Binkley G."/>
            <person name="Balakrishnan R."/>
            <person name="Costanzo M.C."/>
            <person name="Dwight S.S."/>
            <person name="Hitz B.C."/>
            <person name="Karra K."/>
            <person name="Nash R.S."/>
            <person name="Weng S."/>
            <person name="Wong E.D."/>
            <person name="Lloyd P."/>
            <person name="Skrzypek M.S."/>
            <person name="Miyasato S.R."/>
            <person name="Simison M."/>
            <person name="Cherry J.M."/>
        </authorList>
    </citation>
    <scope>GENOME REANNOTATION</scope>
    <source>
        <strain>ATCC 204508 / S288c</strain>
    </source>
</reference>
<reference key="3">
    <citation type="journal article" date="2003" name="Nature">
        <title>Global analysis of protein localization in budding yeast.</title>
        <authorList>
            <person name="Huh W.-K."/>
            <person name="Falvo J.V."/>
            <person name="Gerke L.C."/>
            <person name="Carroll A.S."/>
            <person name="Howson R.W."/>
            <person name="Weissman J.S."/>
            <person name="O'Shea E.K."/>
        </authorList>
    </citation>
    <scope>SUBCELLULAR LOCATION [LARGE SCALE ANALYSIS]</scope>
</reference>
<reference key="4">
    <citation type="journal article" date="2003" name="Nature">
        <title>Global analysis of protein expression in yeast.</title>
        <authorList>
            <person name="Ghaemmaghami S."/>
            <person name="Huh W.-K."/>
            <person name="Bower K."/>
            <person name="Howson R.W."/>
            <person name="Belle A."/>
            <person name="Dephoure N."/>
            <person name="O'Shea E.K."/>
            <person name="Weissman J.S."/>
        </authorList>
    </citation>
    <scope>LEVEL OF PROTEIN EXPRESSION [LARGE SCALE ANALYSIS]</scope>
</reference>
<reference key="5">
    <citation type="journal article" date="2007" name="J. Proteome Res.">
        <title>Large-scale phosphorylation analysis of alpha-factor-arrested Saccharomyces cerevisiae.</title>
        <authorList>
            <person name="Li X."/>
            <person name="Gerber S.A."/>
            <person name="Rudner A.D."/>
            <person name="Beausoleil S.A."/>
            <person name="Haas W."/>
            <person name="Villen J."/>
            <person name="Elias J.E."/>
            <person name="Gygi S.P."/>
        </authorList>
    </citation>
    <scope>PHOSPHORYLATION [LARGE SCALE ANALYSIS] AT SER-380</scope>
    <scope>IDENTIFICATION BY MASS SPECTROMETRY [LARGE SCALE ANALYSIS]</scope>
    <source>
        <strain>ADR376</strain>
    </source>
</reference>
<reference key="6">
    <citation type="journal article" date="2008" name="Mol. Cell. Proteomics">
        <title>A multidimensional chromatography technology for in-depth phosphoproteome analysis.</title>
        <authorList>
            <person name="Albuquerque C.P."/>
            <person name="Smolka M.B."/>
            <person name="Payne S.H."/>
            <person name="Bafna V."/>
            <person name="Eng J."/>
            <person name="Zhou H."/>
        </authorList>
    </citation>
    <scope>PHOSPHORYLATION [LARGE SCALE ANALYSIS] AT THR-196; SER-246 AND SER-380</scope>
    <scope>IDENTIFICATION BY MASS SPECTROMETRY [LARGE SCALE ANALYSIS]</scope>
</reference>
<reference key="7">
    <citation type="journal article" date="2009" name="Science">
        <title>Global analysis of Cdk1 substrate phosphorylation sites provides insights into evolution.</title>
        <authorList>
            <person name="Holt L.J."/>
            <person name="Tuch B.B."/>
            <person name="Villen J."/>
            <person name="Johnson A.D."/>
            <person name="Gygi S.P."/>
            <person name="Morgan D.O."/>
        </authorList>
    </citation>
    <scope>PHOSPHORYLATION [LARGE SCALE ANALYSIS] AT SER-377 AND SER-380</scope>
    <scope>IDENTIFICATION BY MASS SPECTROMETRY [LARGE SCALE ANALYSIS]</scope>
</reference>
<reference key="8">
    <citation type="journal article" date="2003" name="J. Biol. Chem.">
        <title>Crystal structure of caspase-2, apical initiator of the intrinsic apoptotic pathway.</title>
        <authorList>
            <person name="Schweizer A."/>
            <person name="Briand C."/>
            <person name="Grutter M.G."/>
        </authorList>
    </citation>
    <scope>X-RAY CRYSTALLOGRAPHY (1.65 ANGSTROMS) OF 54-57</scope>
</reference>
<reference key="9">
    <citation type="journal article" date="2008" name="Apoptosis">
        <title>Structural basis for executioner caspase recognition of P5 position in substrates.</title>
        <authorList>
            <person name="Fu G."/>
            <person name="Chumanevich A.A."/>
            <person name="Agniswamy J."/>
            <person name="Fang B."/>
            <person name="Harrison R.W."/>
            <person name="Weber I.T."/>
        </authorList>
    </citation>
    <scope>X-RAY CRYSTALLOGRAPHY (2.45 ANGSTROMS) OF 54-57</scope>
</reference>
<sequence length="725" mass="81754">MFKVFGFGAKEEIPELSQEEKTKAILKQAHDFEQALRAMDYVLDDNADEGLALLDESDAKEASDQTINALARGVIEFLEATLGFEAEEMKKASATLAKAEALSLKSRERAQKIGLKSSSLYPPGTVYAVTYTESCLLHALLMIFSESMMEAAKAILKLRKSYYMLQEILETIKAANKAKKLKITSGSEDKESTPATFITGGDAFNSVDIPYELTPEEQKDKDLLQFAEQIHSMRTERLSGAHIGNSPAINRLRGELGLQAMEDLPEEEITDHKVLSDDIDLSQATIDEFVHSGVNLCFGILQVVISLLPPAIGAVLSVVGFRGSREEGLRLVWKATKQRNVHGCIGLLALMFYYDGPFQFTDDDFDIPAAVKDSSNSEDSEDEEMDGPTLLHPGKILEDALLQSRALFPNSALWLLNEARMLSGKGRLEEAVALMDSIDVSKIRMRQVKSLMIFDRAITLIHLHQYDRAAEDILSLLDISDWSHAFYTYFAGCCYLENWRMCEMGLMKSDKKDEYQKKAEELIFTSVNLLGKKTFKSKNLPLDRFILRKVEQFKAKKEELGVENPLDGIATSPVHEIAYFYNGYNRMSEEHLELTKKMLTEYRNPAIEALDSDQELIKDLLVSLTLRRLGHIQEGCDILDEKVLPKFFSIQNGKVKYIKKTEDPWAYPTALYERALFTWKLEGMDGLPESKEWLLRAQGYADDYELSTRVGMKIKAAIDRVDHSL</sequence>
<evidence type="ECO:0000269" key="1">
    <source>
    </source>
</evidence>
<evidence type="ECO:0000269" key="2">
    <source>
    </source>
</evidence>
<evidence type="ECO:0000305" key="3"/>
<evidence type="ECO:0007744" key="4">
    <source>
    </source>
</evidence>
<evidence type="ECO:0007744" key="5">
    <source>
    </source>
</evidence>
<evidence type="ECO:0007744" key="6">
    <source>
    </source>
</evidence>
<comment type="subcellular location">
    <subcellularLocation>
        <location evidence="1">Cytoplasm</location>
    </subcellularLocation>
    <subcellularLocation>
        <location evidence="1">Nucleus</location>
    </subcellularLocation>
</comment>
<comment type="miscellaneous">
    <text evidence="2">Present with 1770 molecules/cell in log phase SD medium.</text>
</comment>
<comment type="similarity">
    <text evidence="3">Belongs to the IML2 family.</text>
</comment>
<name>YKR18_YEAST</name>
<organism>
    <name type="scientific">Saccharomyces cerevisiae (strain ATCC 204508 / S288c)</name>
    <name type="common">Baker's yeast</name>
    <dbReference type="NCBI Taxonomy" id="559292"/>
    <lineage>
        <taxon>Eukaryota</taxon>
        <taxon>Fungi</taxon>
        <taxon>Dikarya</taxon>
        <taxon>Ascomycota</taxon>
        <taxon>Saccharomycotina</taxon>
        <taxon>Saccharomycetes</taxon>
        <taxon>Saccharomycetales</taxon>
        <taxon>Saccharomycetaceae</taxon>
        <taxon>Saccharomyces</taxon>
    </lineage>
</organism>
<gene>
    <name type="ordered locus">YKR018C</name>
</gene>
<accession>P36114</accession>
<accession>D6VX83</accession>
<keyword id="KW-0002">3D-structure</keyword>
<keyword id="KW-0963">Cytoplasm</keyword>
<keyword id="KW-0539">Nucleus</keyword>
<keyword id="KW-0597">Phosphoprotein</keyword>
<keyword id="KW-1185">Reference proteome</keyword>
<protein>
    <recommendedName>
        <fullName>IML2-like protein YKR018C</fullName>
    </recommendedName>
</protein>